<gene>
    <name type="ORF">DDB_G0282801</name>
</gene>
<feature type="chain" id="PRO_0000393725" description="Protein PIEZO homolog">
    <location>
        <begin position="1"/>
        <end position="3080"/>
    </location>
</feature>
<feature type="transmembrane region" description="Helical" evidence="1">
    <location>
        <begin position="28"/>
        <end position="48"/>
    </location>
</feature>
<feature type="transmembrane region" description="Helical" evidence="1">
    <location>
        <begin position="57"/>
        <end position="77"/>
    </location>
</feature>
<feature type="transmembrane region" description="Helical" evidence="1">
    <location>
        <begin position="86"/>
        <end position="106"/>
    </location>
</feature>
<feature type="transmembrane region" description="Helical" evidence="1">
    <location>
        <begin position="113"/>
        <end position="133"/>
    </location>
</feature>
<feature type="transmembrane region" description="Helical" evidence="1">
    <location>
        <begin position="204"/>
        <end position="224"/>
    </location>
</feature>
<feature type="transmembrane region" description="Helical" evidence="1">
    <location>
        <begin position="232"/>
        <end position="252"/>
    </location>
</feature>
<feature type="transmembrane region" description="Helical" evidence="1">
    <location>
        <begin position="285"/>
        <end position="305"/>
    </location>
</feature>
<feature type="transmembrane region" description="Helical" evidence="1">
    <location>
        <begin position="362"/>
        <end position="382"/>
    </location>
</feature>
<feature type="transmembrane region" description="Helical" evidence="1">
    <location>
        <begin position="396"/>
        <end position="416"/>
    </location>
</feature>
<feature type="transmembrane region" description="Helical" evidence="1">
    <location>
        <begin position="438"/>
        <end position="458"/>
    </location>
</feature>
<feature type="transmembrane region" description="Helical" evidence="1">
    <location>
        <begin position="672"/>
        <end position="692"/>
    </location>
</feature>
<feature type="transmembrane region" description="Helical" evidence="1">
    <location>
        <begin position="700"/>
        <end position="720"/>
    </location>
</feature>
<feature type="transmembrane region" description="Helical" evidence="1">
    <location>
        <begin position="740"/>
        <end position="760"/>
    </location>
</feature>
<feature type="transmembrane region" description="Helical" evidence="1">
    <location>
        <begin position="827"/>
        <end position="847"/>
    </location>
</feature>
<feature type="transmembrane region" description="Helical" evidence="1">
    <location>
        <begin position="849"/>
        <end position="869"/>
    </location>
</feature>
<feature type="transmembrane region" description="Helical" evidence="1">
    <location>
        <begin position="872"/>
        <end position="892"/>
    </location>
</feature>
<feature type="transmembrane region" description="Helical" evidence="1">
    <location>
        <begin position="928"/>
        <end position="948"/>
    </location>
</feature>
<feature type="transmembrane region" description="Helical" evidence="1">
    <location>
        <begin position="1036"/>
        <end position="1056"/>
    </location>
</feature>
<feature type="transmembrane region" description="Helical" evidence="1">
    <location>
        <begin position="1067"/>
        <end position="1087"/>
    </location>
</feature>
<feature type="transmembrane region" description="Helical" evidence="1">
    <location>
        <begin position="1281"/>
        <end position="1301"/>
    </location>
</feature>
<feature type="transmembrane region" description="Helical" evidence="1">
    <location>
        <begin position="1316"/>
        <end position="1336"/>
    </location>
</feature>
<feature type="transmembrane region" description="Helical" evidence="1">
    <location>
        <begin position="1360"/>
        <end position="1380"/>
    </location>
</feature>
<feature type="transmembrane region" description="Helical" evidence="1">
    <location>
        <begin position="1472"/>
        <end position="1492"/>
    </location>
</feature>
<feature type="transmembrane region" description="Helical" evidence="1">
    <location>
        <begin position="1519"/>
        <end position="1539"/>
    </location>
</feature>
<feature type="transmembrane region" description="Helical" evidence="1">
    <location>
        <begin position="1619"/>
        <end position="1639"/>
    </location>
</feature>
<feature type="transmembrane region" description="Helical" evidence="1">
    <location>
        <begin position="2078"/>
        <end position="2098"/>
    </location>
</feature>
<feature type="transmembrane region" description="Helical" evidence="1">
    <location>
        <begin position="2112"/>
        <end position="2132"/>
    </location>
</feature>
<feature type="transmembrane region" description="Helical" evidence="1">
    <location>
        <begin position="2199"/>
        <end position="2219"/>
    </location>
</feature>
<feature type="transmembrane region" description="Helical" evidence="1">
    <location>
        <begin position="2427"/>
        <end position="2447"/>
    </location>
</feature>
<feature type="transmembrane region" description="Helical" evidence="1">
    <location>
        <begin position="2457"/>
        <end position="2477"/>
    </location>
</feature>
<feature type="transmembrane region" description="Helical" evidence="1">
    <location>
        <begin position="2500"/>
        <end position="2520"/>
    </location>
</feature>
<feature type="transmembrane region" description="Helical" evidence="1">
    <location>
        <begin position="2530"/>
        <end position="2550"/>
    </location>
</feature>
<feature type="transmembrane region" description="Helical" evidence="1">
    <location>
        <begin position="2553"/>
        <end position="2573"/>
    </location>
</feature>
<feature type="transmembrane region" description="Helical" evidence="1">
    <location>
        <begin position="2671"/>
        <end position="2691"/>
    </location>
</feature>
<feature type="transmembrane region" description="Helical" evidence="1">
    <location>
        <begin position="2955"/>
        <end position="2975"/>
    </location>
</feature>
<feature type="region of interest" description="Disordered" evidence="2">
    <location>
        <begin position="469"/>
        <end position="548"/>
    </location>
</feature>
<feature type="region of interest" description="Disordered" evidence="2">
    <location>
        <begin position="1158"/>
        <end position="1185"/>
    </location>
</feature>
<feature type="region of interest" description="Disordered" evidence="2">
    <location>
        <begin position="1199"/>
        <end position="1253"/>
    </location>
</feature>
<feature type="region of interest" description="Disordered" evidence="2">
    <location>
        <begin position="1704"/>
        <end position="1812"/>
    </location>
</feature>
<feature type="region of interest" description="Disordered" evidence="2">
    <location>
        <begin position="1873"/>
        <end position="1899"/>
    </location>
</feature>
<feature type="region of interest" description="Disordered" evidence="2">
    <location>
        <begin position="1958"/>
        <end position="2032"/>
    </location>
</feature>
<feature type="region of interest" description="Disordered" evidence="2">
    <location>
        <begin position="2277"/>
        <end position="2367"/>
    </location>
</feature>
<feature type="region of interest" description="Disordered" evidence="2">
    <location>
        <begin position="2835"/>
        <end position="2863"/>
    </location>
</feature>
<feature type="region of interest" description="Disordered" evidence="2">
    <location>
        <begin position="3054"/>
        <end position="3080"/>
    </location>
</feature>
<feature type="compositionally biased region" description="Low complexity" evidence="2">
    <location>
        <begin position="473"/>
        <end position="505"/>
    </location>
</feature>
<feature type="compositionally biased region" description="Polar residues" evidence="2">
    <location>
        <begin position="512"/>
        <end position="532"/>
    </location>
</feature>
<feature type="compositionally biased region" description="Acidic residues" evidence="2">
    <location>
        <begin position="1166"/>
        <end position="1176"/>
    </location>
</feature>
<feature type="compositionally biased region" description="Low complexity" evidence="2">
    <location>
        <begin position="1202"/>
        <end position="1252"/>
    </location>
</feature>
<feature type="compositionally biased region" description="Basic residues" evidence="2">
    <location>
        <begin position="1704"/>
        <end position="1714"/>
    </location>
</feature>
<feature type="compositionally biased region" description="Low complexity" evidence="2">
    <location>
        <begin position="1715"/>
        <end position="1742"/>
    </location>
</feature>
<feature type="compositionally biased region" description="Polar residues" evidence="2">
    <location>
        <begin position="1762"/>
        <end position="1782"/>
    </location>
</feature>
<feature type="compositionally biased region" description="Low complexity" evidence="2">
    <location>
        <begin position="1789"/>
        <end position="1812"/>
    </location>
</feature>
<feature type="compositionally biased region" description="Low complexity" evidence="2">
    <location>
        <begin position="1958"/>
        <end position="2021"/>
    </location>
</feature>
<feature type="compositionally biased region" description="Low complexity" evidence="2">
    <location>
        <begin position="2288"/>
        <end position="2367"/>
    </location>
</feature>
<feature type="compositionally biased region" description="Low complexity" evidence="2">
    <location>
        <begin position="2836"/>
        <end position="2863"/>
    </location>
</feature>
<feature type="compositionally biased region" description="Low complexity" evidence="2">
    <location>
        <begin position="3061"/>
        <end position="3074"/>
    </location>
</feature>
<feature type="glycosylation site" description="N-linked (GlcNAc...) asparagine" evidence="1">
    <location>
        <position position="276"/>
    </location>
</feature>
<feature type="glycosylation site" description="N-linked (GlcNAc...) asparagine" evidence="1">
    <location>
        <position position="312"/>
    </location>
</feature>
<feature type="glycosylation site" description="N-linked (GlcNAc...) asparagine" evidence="1">
    <location>
        <position position="339"/>
    </location>
</feature>
<feature type="glycosylation site" description="N-linked (GlcNAc...) asparagine" evidence="1">
    <location>
        <position position="434"/>
    </location>
</feature>
<feature type="glycosylation site" description="N-linked (GlcNAc...) asparagine" evidence="1">
    <location>
        <position position="514"/>
    </location>
</feature>
<feature type="glycosylation site" description="N-linked (GlcNAc...) asparagine" evidence="1">
    <location>
        <position position="567"/>
    </location>
</feature>
<feature type="glycosylation site" description="N-linked (GlcNAc...) asparagine" evidence="1">
    <location>
        <position position="606"/>
    </location>
</feature>
<feature type="glycosylation site" description="N-linked (GlcNAc...) asparagine" evidence="1">
    <location>
        <position position="795"/>
    </location>
</feature>
<feature type="glycosylation site" description="N-linked (GlcNAc...) asparagine" evidence="1">
    <location>
        <position position="918"/>
    </location>
</feature>
<feature type="glycosylation site" description="N-linked (GlcNAc...) asparagine" evidence="1">
    <location>
        <position position="992"/>
    </location>
</feature>
<feature type="glycosylation site" description="N-linked (GlcNAc...) asparagine" evidence="1">
    <location>
        <position position="1109"/>
    </location>
</feature>
<feature type="glycosylation site" description="N-linked (GlcNAc...) asparagine" evidence="1">
    <location>
        <position position="1191"/>
    </location>
</feature>
<feature type="glycosylation site" description="N-linked (GlcNAc...) asparagine" evidence="1">
    <location>
        <position position="1240"/>
    </location>
</feature>
<feature type="glycosylation site" description="N-linked (GlcNAc...) asparagine" evidence="1">
    <location>
        <position position="1251"/>
    </location>
</feature>
<feature type="glycosylation site" description="N-linked (GlcNAc...) asparagine" evidence="1">
    <location>
        <position position="1424"/>
    </location>
</feature>
<feature type="glycosylation site" description="N-linked (GlcNAc...) asparagine" evidence="1">
    <location>
        <position position="1440"/>
    </location>
</feature>
<feature type="glycosylation site" description="N-linked (GlcNAc...) asparagine" evidence="1">
    <location>
        <position position="1559"/>
    </location>
</feature>
<feature type="glycosylation site" description="N-linked (GlcNAc...) asparagine" evidence="1">
    <location>
        <position position="1589"/>
    </location>
</feature>
<feature type="glycosylation site" description="N-linked (GlcNAc...) asparagine" evidence="1">
    <location>
        <position position="1731"/>
    </location>
</feature>
<feature type="glycosylation site" description="N-linked (GlcNAc...) asparagine" evidence="1">
    <location>
        <position position="1734"/>
    </location>
</feature>
<feature type="glycosylation site" description="N-linked (GlcNAc...) asparagine" evidence="1">
    <location>
        <position position="1763"/>
    </location>
</feature>
<feature type="glycosylation site" description="N-linked (GlcNAc...) asparagine" evidence="1">
    <location>
        <position position="1768"/>
    </location>
</feature>
<feature type="glycosylation site" description="N-linked (GlcNAc...) asparagine" evidence="1">
    <location>
        <position position="1771"/>
    </location>
</feature>
<feature type="glycosylation site" description="N-linked (GlcNAc...) asparagine" evidence="1">
    <location>
        <position position="1779"/>
    </location>
</feature>
<feature type="glycosylation site" description="N-linked (GlcNAc...) asparagine" evidence="1">
    <location>
        <position position="1807"/>
    </location>
</feature>
<feature type="glycosylation site" description="N-linked (GlcNAc...) asparagine" evidence="1">
    <location>
        <position position="1864"/>
    </location>
</feature>
<feature type="glycosylation site" description="N-linked (GlcNAc...) asparagine" evidence="1">
    <location>
        <position position="2027"/>
    </location>
</feature>
<feature type="glycosylation site" description="N-linked (GlcNAc...) asparagine" evidence="1">
    <location>
        <position position="2148"/>
    </location>
</feature>
<feature type="glycosylation site" description="N-linked (GlcNAc...) asparagine" evidence="1">
    <location>
        <position position="2285"/>
    </location>
</feature>
<feature type="glycosylation site" description="N-linked (GlcNAc...) asparagine" evidence="1">
    <location>
        <position position="2478"/>
    </location>
</feature>
<feature type="glycosylation site" description="N-linked (GlcNAc...) asparagine" evidence="1">
    <location>
        <position position="2762"/>
    </location>
</feature>
<feature type="glycosylation site" description="N-linked (GlcNAc...) asparagine" evidence="1">
    <location>
        <position position="2790"/>
    </location>
</feature>
<feature type="glycosylation site" description="N-linked (GlcNAc...) asparagine" evidence="1">
    <location>
        <position position="2837"/>
    </location>
</feature>
<feature type="glycosylation site" description="N-linked (GlcNAc...) asparagine" evidence="1">
    <location>
        <position position="2840"/>
    </location>
</feature>
<feature type="glycosylation site" description="N-linked (GlcNAc...) asparagine" evidence="1">
    <location>
        <position position="2848"/>
    </location>
</feature>
<feature type="glycosylation site" description="N-linked (GlcNAc...) asparagine" evidence="1">
    <location>
        <position position="2858"/>
    </location>
</feature>
<feature type="glycosylation site" description="N-linked (GlcNAc...) asparagine" evidence="1">
    <location>
        <position position="2908"/>
    </location>
</feature>
<feature type="glycosylation site" description="N-linked (GlcNAc...) asparagine" evidence="1">
    <location>
        <position position="2913"/>
    </location>
</feature>
<feature type="glycosylation site" description="N-linked (GlcNAc...) asparagine" evidence="1">
    <location>
        <position position="2935"/>
    </location>
</feature>
<feature type="glycosylation site" description="N-linked (GlcNAc...) asparagine" evidence="1">
    <location>
        <position position="3057"/>
    </location>
</feature>
<dbReference type="EMBL" id="AAFI02000047">
    <property type="protein sequence ID" value="EAL66260.1"/>
    <property type="molecule type" value="Genomic_DNA"/>
</dbReference>
<dbReference type="RefSeq" id="XP_640187.1">
    <property type="nucleotide sequence ID" value="XM_635095.1"/>
</dbReference>
<dbReference type="SMR" id="Q54S52"/>
<dbReference type="FunCoup" id="Q54S52">
    <property type="interactions" value="3"/>
</dbReference>
<dbReference type="STRING" id="44689.Q54S52"/>
<dbReference type="GlyGen" id="Q54S52">
    <property type="glycosylation" value="41 sites"/>
</dbReference>
<dbReference type="PaxDb" id="44689-DDB0233999"/>
<dbReference type="EnsemblProtists" id="EAL66260">
    <property type="protein sequence ID" value="EAL66260"/>
    <property type="gene ID" value="DDB_G0282801"/>
</dbReference>
<dbReference type="GeneID" id="8623728"/>
<dbReference type="KEGG" id="ddi:DDB_G0282801"/>
<dbReference type="dictyBase" id="DDB_G0282801">
    <property type="gene designation" value="pzoA"/>
</dbReference>
<dbReference type="VEuPathDB" id="AmoebaDB:DDB_G0282801"/>
<dbReference type="eggNOG" id="KOG1893">
    <property type="taxonomic scope" value="Eukaryota"/>
</dbReference>
<dbReference type="HOGENOM" id="CLU_225851_0_0_1"/>
<dbReference type="InParanoid" id="Q54S52"/>
<dbReference type="OMA" id="KTTFQMA"/>
<dbReference type="PRO" id="PR:Q54S52"/>
<dbReference type="Proteomes" id="UP000002195">
    <property type="component" value="Chromosome 3"/>
</dbReference>
<dbReference type="GO" id="GO:0016020">
    <property type="term" value="C:membrane"/>
    <property type="evidence" value="ECO:0000318"/>
    <property type="project" value="GO_Central"/>
</dbReference>
<dbReference type="GO" id="GO:0140135">
    <property type="term" value="F:mechanosensitive monoatomic cation channel activity"/>
    <property type="evidence" value="ECO:0000315"/>
    <property type="project" value="dictyBase"/>
</dbReference>
<dbReference type="GO" id="GO:0008381">
    <property type="term" value="F:mechanosensitive monoatomic ion channel activity"/>
    <property type="evidence" value="ECO:0000318"/>
    <property type="project" value="GO_Central"/>
</dbReference>
<dbReference type="GO" id="GO:0005261">
    <property type="term" value="F:monoatomic cation channel activity"/>
    <property type="evidence" value="ECO:0000318"/>
    <property type="project" value="GO_Central"/>
</dbReference>
<dbReference type="GO" id="GO:0071260">
    <property type="term" value="P:cellular response to mechanical stimulus"/>
    <property type="evidence" value="ECO:0000315"/>
    <property type="project" value="dictyBase"/>
</dbReference>
<dbReference type="GO" id="GO:0050982">
    <property type="term" value="P:detection of mechanical stimulus"/>
    <property type="evidence" value="ECO:0000315"/>
    <property type="project" value="dictyBase"/>
</dbReference>
<dbReference type="GO" id="GO:0042391">
    <property type="term" value="P:regulation of membrane potential"/>
    <property type="evidence" value="ECO:0000318"/>
    <property type="project" value="GO_Central"/>
</dbReference>
<dbReference type="Gene3D" id="1.20.1070.10">
    <property type="entry name" value="Rhodopsin 7-helix transmembrane proteins"/>
    <property type="match status" value="1"/>
</dbReference>
<dbReference type="InterPro" id="IPR027272">
    <property type="entry name" value="Piezo"/>
</dbReference>
<dbReference type="InterPro" id="IPR031334">
    <property type="entry name" value="Piezo_cap_dom"/>
</dbReference>
<dbReference type="InterPro" id="IPR056770">
    <property type="entry name" value="Piezo_THU9_anchor"/>
</dbReference>
<dbReference type="InterPro" id="IPR056769">
    <property type="entry name" value="Piezo_TM1-24"/>
</dbReference>
<dbReference type="InterPro" id="IPR056768">
    <property type="entry name" value="THU_Piezo"/>
</dbReference>
<dbReference type="PANTHER" id="PTHR13167">
    <property type="entry name" value="PIEZO-TYPE MECHANOSENSITIVE ION CHANNEL COMPONENT"/>
    <property type="match status" value="1"/>
</dbReference>
<dbReference type="PANTHER" id="PTHR13167:SF25">
    <property type="entry name" value="PIEZO-TYPE MECHANOSENSITIVE ION CHANNEL COMPONENT"/>
    <property type="match status" value="1"/>
</dbReference>
<dbReference type="Pfam" id="PF12166">
    <property type="entry name" value="Piezo_cap"/>
    <property type="match status" value="1"/>
</dbReference>
<dbReference type="Pfam" id="PF24874">
    <property type="entry name" value="Piezo_THU9_anchor"/>
    <property type="match status" value="1"/>
</dbReference>
<dbReference type="Pfam" id="PF24871">
    <property type="entry name" value="Piezo_TM1-24"/>
    <property type="match status" value="2"/>
</dbReference>
<dbReference type="Pfam" id="PF23188">
    <property type="entry name" value="THU_Piezo1"/>
    <property type="match status" value="1"/>
</dbReference>
<dbReference type="SUPFAM" id="SSF81995">
    <property type="entry name" value="beta-sandwich domain of Sec23/24"/>
    <property type="match status" value="1"/>
</dbReference>
<organism>
    <name type="scientific">Dictyostelium discoideum</name>
    <name type="common">Social amoeba</name>
    <dbReference type="NCBI Taxonomy" id="44689"/>
    <lineage>
        <taxon>Eukaryota</taxon>
        <taxon>Amoebozoa</taxon>
        <taxon>Evosea</taxon>
        <taxon>Eumycetozoa</taxon>
        <taxon>Dictyostelia</taxon>
        <taxon>Dictyosteliales</taxon>
        <taxon>Dictyosteliaceae</taxon>
        <taxon>Dictyostelium</taxon>
    </lineage>
</organism>
<name>Y2801_DICDI</name>
<comment type="subcellular location">
    <subcellularLocation>
        <location evidence="3">Membrane</location>
        <topology evidence="3">Multi-pass membrane protein</topology>
    </subcellularLocation>
</comment>
<comment type="similarity">
    <text evidence="3">Belongs to the PIEZO (TC 1.A.75) family.</text>
</comment>
<reference key="1">
    <citation type="journal article" date="2005" name="Nature">
        <title>The genome of the social amoeba Dictyostelium discoideum.</title>
        <authorList>
            <person name="Eichinger L."/>
            <person name="Pachebat J.A."/>
            <person name="Gloeckner G."/>
            <person name="Rajandream M.A."/>
            <person name="Sucgang R."/>
            <person name="Berriman M."/>
            <person name="Song J."/>
            <person name="Olsen R."/>
            <person name="Szafranski K."/>
            <person name="Xu Q."/>
            <person name="Tunggal B."/>
            <person name="Kummerfeld S."/>
            <person name="Madera M."/>
            <person name="Konfortov B.A."/>
            <person name="Rivero F."/>
            <person name="Bankier A.T."/>
            <person name="Lehmann R."/>
            <person name="Hamlin N."/>
            <person name="Davies R."/>
            <person name="Gaudet P."/>
            <person name="Fey P."/>
            <person name="Pilcher K."/>
            <person name="Chen G."/>
            <person name="Saunders D."/>
            <person name="Sodergren E.J."/>
            <person name="Davis P."/>
            <person name="Kerhornou A."/>
            <person name="Nie X."/>
            <person name="Hall N."/>
            <person name="Anjard C."/>
            <person name="Hemphill L."/>
            <person name="Bason N."/>
            <person name="Farbrother P."/>
            <person name="Desany B."/>
            <person name="Just E."/>
            <person name="Morio T."/>
            <person name="Rost R."/>
            <person name="Churcher C.M."/>
            <person name="Cooper J."/>
            <person name="Haydock S."/>
            <person name="van Driessche N."/>
            <person name="Cronin A."/>
            <person name="Goodhead I."/>
            <person name="Muzny D.M."/>
            <person name="Mourier T."/>
            <person name="Pain A."/>
            <person name="Lu M."/>
            <person name="Harper D."/>
            <person name="Lindsay R."/>
            <person name="Hauser H."/>
            <person name="James K.D."/>
            <person name="Quiles M."/>
            <person name="Madan Babu M."/>
            <person name="Saito T."/>
            <person name="Buchrieser C."/>
            <person name="Wardroper A."/>
            <person name="Felder M."/>
            <person name="Thangavelu M."/>
            <person name="Johnson D."/>
            <person name="Knights A."/>
            <person name="Loulseged H."/>
            <person name="Mungall K.L."/>
            <person name="Oliver K."/>
            <person name="Price C."/>
            <person name="Quail M.A."/>
            <person name="Urushihara H."/>
            <person name="Hernandez J."/>
            <person name="Rabbinowitsch E."/>
            <person name="Steffen D."/>
            <person name="Sanders M."/>
            <person name="Ma J."/>
            <person name="Kohara Y."/>
            <person name="Sharp S."/>
            <person name="Simmonds M.N."/>
            <person name="Spiegler S."/>
            <person name="Tivey A."/>
            <person name="Sugano S."/>
            <person name="White B."/>
            <person name="Walker D."/>
            <person name="Woodward J.R."/>
            <person name="Winckler T."/>
            <person name="Tanaka Y."/>
            <person name="Shaulsky G."/>
            <person name="Schleicher M."/>
            <person name="Weinstock G.M."/>
            <person name="Rosenthal A."/>
            <person name="Cox E.C."/>
            <person name="Chisholm R.L."/>
            <person name="Gibbs R.A."/>
            <person name="Loomis W.F."/>
            <person name="Platzer M."/>
            <person name="Kay R.R."/>
            <person name="Williams J.G."/>
            <person name="Dear P.H."/>
            <person name="Noegel A.A."/>
            <person name="Barrell B.G."/>
            <person name="Kuspa A."/>
        </authorList>
    </citation>
    <scope>NUCLEOTIDE SEQUENCE [LARGE SCALE GENOMIC DNA]</scope>
    <source>
        <strain>AX4</strain>
    </source>
</reference>
<evidence type="ECO:0000255" key="1"/>
<evidence type="ECO:0000256" key="2">
    <source>
        <dbReference type="SAM" id="MobiDB-lite"/>
    </source>
</evidence>
<evidence type="ECO:0000305" key="3"/>
<proteinExistence type="inferred from homology"/>
<accession>Q54S52</accession>
<keyword id="KW-0325">Glycoprotein</keyword>
<keyword id="KW-0472">Membrane</keyword>
<keyword id="KW-1185">Reference proteome</keyword>
<keyword id="KW-0812">Transmembrane</keyword>
<keyword id="KW-1133">Transmembrane helix</keyword>
<sequence length="3080" mass="356339">MIGYFFVSLIYPFSLICSSVFRSNVVSYIYFIFFLLSILCLPHKSLILKNKISKTLPIITLVLSMFSLILQLLVNVVKVFQEQDELSVNILTAFGFYKYNSFWIVFRNVLPDVIVFVISLFTIILWFKNLVYPASINIKDSLKKTTSLNNVDQILNSPYVHGGSGNFNSGSNNNNNNNNIVYRPAGRGLTGFSFLMLTLSSISYPSIINVIYFVFTILIILLLASKLSIHKVMLKCYPILLITSLCHLLFVYLNQIEYFYMKYTVFKEQKWYGVLNYTEWDVTYWPLVIGYITVLLLYISTCILFRKQQLFNRTKPRYKQKLDKLGIMSDSNNNNNNNNKSRTTKLAIIFSKHGWTICCSQILVVCFFLTASVASAILLASGLICTLLPLKVFKKVIYIILLYFLVFISAQYIFNIPFSYSETDLQSYGLFSFNNSKWLYIGVQIVVSLTLSLYCFYSDIKDDDLGTIKKDQQSQQSQPQPQQQQQQQQSSQNNQIQQSPLQYQQPLPPTPISNKSLPSSPMSTKSTTVHIQNNNNGGGGGIIRPRKPLPPVPLGMIGKSSMAMTSNSSFGSNKPLNYIQQQQLQLQQQKVIGYQTSASINQLDINDSFSIAFPSLMLLTSGIGKGYDTFRGKYGGTFSKITSSLKAIAEITFLAIIGQSYRLALVGLFFCGLTSINLLNAGYMLFFIVFVISESLASRFWMCLIIYAQMVLLTLYIWQLSWISSYENDLTVLIGMTNYYGSPLWVGLIWHIIIITFSIIQWNVNKLYQRGLFSSSSSSSSSSNNNQNNNQNNQNNSYEDKFKNIPNFLLVFGDFIYRSVQQLSLPFCYLVIVIVSIFTKISLINIVYMATVFLCLLIHHISANGSIHIKRFWIIIILSQGVVLVARYIMQFNQVSHWLNSIFPKSNYISLSDIGLRNYSSSDRFIELFGCSSILVVCVFQLTVFFSIGQQQQQQQQQQQQQQQQQQQQQQQQQQQQQQQQQQQQQQQQQLNTSNNNNQNNNNLIIKKYTFFDSLLYIVKRICYLHGPKFVLWMVFAISIAEYNFFNFIYLIMIVISMSFKKGTYRIGSFLLFYSQLWVLTQLAALLPTVQSFNSDKFFMDWVGLRQPNVSTPWDAVKLNLAIILVISIQQTSYWWNKEIQNEKLEIKKKKQLKKQQQQQRKLEEHEEEYEEEEDQFGNKKNNDKLSLLSNDSIEIILDDGNNNNNNNNNNNNNNNNNNNNNNNNNNNNNNNNNNNNNNNQSNNENNENNNNSKKENLKKRLFWYISNFYELYGLECVFLVLAFALFWRLNILGMIYLIIIAVGLNIDKRNLHKLIYVSALLAPTILIQYLLILVVPTKENSYPWLDHPFFLNHKTIDNLLLLSIPDRYVLVIDFLVLFFSMLLFKQRNGYYLYKDFELHQQQQLNQQLNQQQHDSLKSIASSNSSSQKPLHPKNFFKFNSSIDGGDDDFTKEPRSWSNELRYMIIRYSSQVILIVIFLAGTAECDILSCFYVFFSVYVLFSGNAHSRKWSYLWKSLHIYNWLVLMAQIIFQVAVILYFQFKFNSNQMFEGHNHNHNHNHSSSSSSSSSGSIIDILSSQSSAIGIGGGNSSGSDSSYEVIENSLPTELYNIAVVFGFKIETGPLSISTISDVIIMVLLAYQKMIFQSRDFHILEEHLKAKRDLNYETAREFYKIRRNARIEQLNSIQDKITQRRSRLQHLKLKRINRRKNRHNHYYNNNPNNNYNNNNNNNNSNSSNSNNNNNDDDSNEPLSLGDNSFVPPKNTTNQNATNSTYSPFANSTMHMPPYENNNNNNNNNNNFNNNPLSNSSSTVSSFGVIEKPLEKKNWVKIYLNKILDWLDPLPDILIENYKKQQLQQQQKLEMNQSLLFGDQLQQEQQQQQEQQQQLNPQQQQSQSSKELPPILEQFEHNDDDFEISLNQAPGDYRNSIFIDSEQMRNAMQQMEQRRQQRLQQSIDASQLLQQQQQQQQASSSNTNTNSNNNNYNNNNNNNNNNNNNNNNNNNNNNNNNNNNNNNNNNNNNEIPKPNQTSSSTITLEPIEDEEEFLYKEKTQYFKRIIRGFSRIARDESKWLVFMACIANGVFYNSIISLVYLLAVFLYGRLFESPRPSKNFWRFMIGYSSLIICLKYVFQIPKNYYNCNENYHNSNNGTILMTSTSVYNTNNNINNNNQLNNNENYEWWQCPNTLLSEQNLLLTLPYVFGLYIIDGHFISGAFWDLAILLCCLWHRHVYRSKGLWNFQEKDFYVDQKQQSPLNLFNLDQQHFDQQQIDQIQNQQDLNNSPISLNSSNNNNNNNNNNNNNNNNNNNNNNNNNNNNNNNNDQTLIDINNNNNNNNNNNNNNNNNNNNNNNNNNNNNNNNNNNNNNNNNNNIIIDQILVDCSNEYDEEDQQQFNEFYDEEFDDRNEQEKENDEQEIQVIKKSSKSIAKIIIYPFKWLFVSIIEYVWLAIRTDEKPGRDYYMPLLFTDFACLFFLVIFPQNFTGIPSSDIAEFLEQNVIPRQYIVILLAQFGVIILDRIIYLYKSVKAKFVLQIVLTVLYHVFLFFYFPDLIVKPFSFGYTWPLVVFYLMKCIYLYYSALQICYGYPILSQNRFLMDGYSDFHNIGYALYKAIPFVYELRTLLDWIATDTTMLFYDWLKFEDLYSTIFSVKCRLEWIKRQGRQKGHKQPKFEKFVTGVTFFIGLVILLWFPLIILSSGLPGSNIEPVNNIQIEVSVVGWNPFLKINQDLSLESGDGDSTMDQNSFNNLKEDYSFLTTDDRQGIQNISINTFSEEIWNLSPPAKAQLINYLLTNTSLQIEVSYTLTRSGGVNSVIVGSNSVQLKPDQELNFYNILTRVQSNNSNNSNNPNENSSSGSDDNNNNSNNNIGSNSFIVEGLFYKFIKLPGVSGNPIYPTDNNGNVLALDALFTMNSTNFNNSNQPPQYFWQVNAYDSTKTYNISTLESIQFYTISSKLPNGITSTLVSAGIIGLYVSVVLSVGRFLRLSITQISIKIQLENLDSCDEILKMIDDVFIAREYGDLVLEEELYHELIQVFRQPQLLYSLTTFKNNQLNLPTTPTINSTLNNQNNQNNNNNNNNNHEKIN</sequence>
<protein>
    <recommendedName>
        <fullName>Protein PIEZO homolog</fullName>
    </recommendedName>
</protein>